<dbReference type="ConoServer" id="5858">
    <property type="toxin name" value="Pc3a"/>
</dbReference>
<dbReference type="GO" id="GO:0005576">
    <property type="term" value="C:extracellular region"/>
    <property type="evidence" value="ECO:0007669"/>
    <property type="project" value="UniProtKB-SubCell"/>
</dbReference>
<dbReference type="GO" id="GO:0090729">
    <property type="term" value="F:toxin activity"/>
    <property type="evidence" value="ECO:0007669"/>
    <property type="project" value="UniProtKB-KW"/>
</dbReference>
<accession>P0DMA1</accession>
<name>CM3A_CONPB</name>
<organism>
    <name type="scientific">Conus pictus</name>
    <name type="common">Cone snail</name>
    <dbReference type="NCBI Taxonomy" id="1042615"/>
    <lineage>
        <taxon>Eukaryota</taxon>
        <taxon>Metazoa</taxon>
        <taxon>Spiralia</taxon>
        <taxon>Lophotrochozoa</taxon>
        <taxon>Mollusca</taxon>
        <taxon>Gastropoda</taxon>
        <taxon>Caenogastropoda</taxon>
        <taxon>Neogastropoda</taxon>
        <taxon>Conoidea</taxon>
        <taxon>Conidae</taxon>
        <taxon>Conus</taxon>
        <taxon>Sciteconus</taxon>
    </lineage>
</organism>
<comment type="subcellular location">
    <subcellularLocation>
        <location evidence="2">Secreted</location>
    </subcellularLocation>
</comment>
<comment type="tissue specificity">
    <text evidence="5">Expressed by the venom duct.</text>
</comment>
<comment type="domain">
    <text evidence="4">The cysteine framework is III (CC-C-C-CC). Classified in the M-1 branch, since 1 residue stands between the fourth and the fifth cysteine residues.</text>
</comment>
<comment type="mass spectrometry">
    <text>monoisotopic.</text>
</comment>
<comment type="similarity">
    <text evidence="4">Belongs to the conotoxin M superfamily.</text>
</comment>
<sequence>HECCKKGFCDPGCDCCDQ</sequence>
<proteinExistence type="evidence at protein level"/>
<evidence type="ECO:0000250" key="1">
    <source>
        <dbReference type="UniProtKB" id="Q5EHP3"/>
    </source>
</evidence>
<evidence type="ECO:0000269" key="2">
    <source>
    </source>
</evidence>
<evidence type="ECO:0000303" key="3">
    <source>
    </source>
</evidence>
<evidence type="ECO:0000305" key="4"/>
<evidence type="ECO:0000305" key="5">
    <source>
    </source>
</evidence>
<protein>
    <recommendedName>
        <fullName evidence="3">Conotoxin pc3a</fullName>
    </recommendedName>
</protein>
<feature type="peptide" id="PRO_0000424798" description="Conotoxin pc3a" evidence="2">
    <location>
        <begin position="1"/>
        <end position="18"/>
    </location>
</feature>
<feature type="disulfide bond" evidence="1">
    <location>
        <begin position="3"/>
        <end position="15"/>
    </location>
</feature>
<feature type="disulfide bond" evidence="1">
    <location>
        <begin position="4"/>
        <end position="13"/>
    </location>
</feature>
<feature type="disulfide bond" evidence="1">
    <location>
        <begin position="9"/>
        <end position="16"/>
    </location>
</feature>
<reference key="1">
    <citation type="journal article" date="2013" name="Peptides">
        <title>Unraveling the peptidome of the South African cone snails Conus pictus and Conus natalis.</title>
        <authorList>
            <person name="Peigneur S."/>
            <person name="Van Der Haegen A."/>
            <person name="Moller C."/>
            <person name="Waelkens E."/>
            <person name="Diego-Garcia E."/>
            <person name="Mari F."/>
            <person name="Naude R."/>
            <person name="Tytgat J."/>
        </authorList>
    </citation>
    <scope>PROTEIN SEQUENCE</scope>
    <scope>MASS SPECTROMETRY</scope>
    <scope>SUBCELLULAR LOCATION</scope>
    <source>
        <tissue>Venom</tissue>
    </source>
</reference>
<keyword id="KW-0903">Direct protein sequencing</keyword>
<keyword id="KW-1015">Disulfide bond</keyword>
<keyword id="KW-0964">Secreted</keyword>
<keyword id="KW-0800">Toxin</keyword>